<keyword id="KW-0002">3D-structure</keyword>
<keyword id="KW-0963">Cytoplasm</keyword>
<keyword id="KW-0235">DNA replication</keyword>
<keyword id="KW-0238">DNA-binding</keyword>
<keyword id="KW-0239">DNA-directed DNA polymerase</keyword>
<keyword id="KW-0548">Nucleotidyltransferase</keyword>
<keyword id="KW-1185">Reference proteome</keyword>
<keyword id="KW-0808">Transferase</keyword>
<protein>
    <recommendedName>
        <fullName>Beta sliding clamp</fullName>
        <shortName>Beta clamp</shortName>
        <shortName>Sliding clamp</shortName>
    </recommendedName>
    <alternativeName>
        <fullName>Beta-clamp processivity factor</fullName>
    </alternativeName>
    <alternativeName>
        <fullName>DNA polymerase III beta sliding clamp subunit</fullName>
    </alternativeName>
    <alternativeName>
        <fullName>DNA polymerase III subunit beta</fullName>
    </alternativeName>
</protein>
<accession>O25242</accession>
<organism>
    <name type="scientific">Helicobacter pylori (strain ATCC 700392 / 26695)</name>
    <name type="common">Campylobacter pylori</name>
    <dbReference type="NCBI Taxonomy" id="85962"/>
    <lineage>
        <taxon>Bacteria</taxon>
        <taxon>Pseudomonadati</taxon>
        <taxon>Campylobacterota</taxon>
        <taxon>Epsilonproteobacteria</taxon>
        <taxon>Campylobacterales</taxon>
        <taxon>Helicobacteraceae</taxon>
        <taxon>Helicobacter</taxon>
    </lineage>
</organism>
<feature type="chain" id="PRO_0000105438" description="Beta sliding clamp">
    <location>
        <begin position="1"/>
        <end position="374"/>
    </location>
</feature>
<feature type="strand" evidence="3">
    <location>
        <begin position="2"/>
        <end position="5"/>
    </location>
</feature>
<feature type="helix" evidence="3">
    <location>
        <begin position="7"/>
        <end position="17"/>
    </location>
</feature>
<feature type="helix" evidence="3">
    <location>
        <begin position="18"/>
        <end position="20"/>
    </location>
</feature>
<feature type="helix" evidence="3">
    <location>
        <begin position="29"/>
        <end position="31"/>
    </location>
</feature>
<feature type="strand" evidence="3">
    <location>
        <begin position="32"/>
        <end position="38"/>
    </location>
</feature>
<feature type="strand" evidence="3">
    <location>
        <begin position="41"/>
        <end position="47"/>
    </location>
</feature>
<feature type="strand" evidence="3">
    <location>
        <begin position="49"/>
        <end position="58"/>
    </location>
</feature>
<feature type="strand" evidence="3">
    <location>
        <begin position="60"/>
        <end position="64"/>
    </location>
</feature>
<feature type="strand" evidence="3">
    <location>
        <begin position="66"/>
        <end position="71"/>
    </location>
</feature>
<feature type="helix" evidence="3">
    <location>
        <begin position="72"/>
        <end position="80"/>
    </location>
</feature>
<feature type="strand" evidence="3">
    <location>
        <begin position="87"/>
        <end position="92"/>
    </location>
</feature>
<feature type="strand" evidence="3">
    <location>
        <begin position="95"/>
        <end position="100"/>
    </location>
</feature>
<feature type="strand" evidence="3">
    <location>
        <begin position="103"/>
        <end position="108"/>
    </location>
</feature>
<feature type="helix" evidence="3">
    <location>
        <begin position="112"/>
        <end position="114"/>
    </location>
</feature>
<feature type="strand" evidence="3">
    <location>
        <begin position="124"/>
        <end position="129"/>
    </location>
</feature>
<feature type="helix" evidence="3">
    <location>
        <begin position="133"/>
        <end position="141"/>
    </location>
</feature>
<feature type="helix" evidence="3">
    <location>
        <begin position="142"/>
        <end position="144"/>
    </location>
</feature>
<feature type="helix" evidence="3">
    <location>
        <begin position="153"/>
        <end position="155"/>
    </location>
</feature>
<feature type="strand" evidence="3">
    <location>
        <begin position="156"/>
        <end position="162"/>
    </location>
</feature>
<feature type="turn" evidence="3">
    <location>
        <begin position="163"/>
        <end position="166"/>
    </location>
</feature>
<feature type="strand" evidence="3">
    <location>
        <begin position="167"/>
        <end position="173"/>
    </location>
</feature>
<feature type="strand" evidence="3">
    <location>
        <begin position="175"/>
        <end position="183"/>
    </location>
</feature>
<feature type="strand" evidence="3">
    <location>
        <begin position="188"/>
        <end position="200"/>
    </location>
</feature>
<feature type="helix" evidence="3">
    <location>
        <begin position="201"/>
        <end position="210"/>
    </location>
</feature>
<feature type="strand" evidence="3">
    <location>
        <begin position="212"/>
        <end position="219"/>
    </location>
</feature>
<feature type="strand" evidence="3">
    <location>
        <begin position="221"/>
        <end position="227"/>
    </location>
</feature>
<feature type="strand" evidence="3">
    <location>
        <begin position="229"/>
        <end position="236"/>
    </location>
</feature>
<feature type="helix" evidence="3">
    <location>
        <begin position="245"/>
        <end position="247"/>
    </location>
</feature>
<feature type="strand" evidence="3">
    <location>
        <begin position="254"/>
        <end position="260"/>
    </location>
</feature>
<feature type="helix" evidence="3">
    <location>
        <begin position="261"/>
        <end position="271"/>
    </location>
</feature>
<feature type="turn" evidence="3">
    <location>
        <begin position="272"/>
        <end position="274"/>
    </location>
</feature>
<feature type="strand" evidence="3">
    <location>
        <begin position="276"/>
        <end position="282"/>
    </location>
</feature>
<feature type="strand" evidence="3">
    <location>
        <begin position="284"/>
        <end position="293"/>
    </location>
</feature>
<feature type="strand" evidence="3">
    <location>
        <begin position="301"/>
        <end position="305"/>
    </location>
</feature>
<feature type="strand" evidence="3">
    <location>
        <begin position="316"/>
        <end position="321"/>
    </location>
</feature>
<feature type="helix" evidence="3">
    <location>
        <begin position="322"/>
        <end position="330"/>
    </location>
</feature>
<feature type="strand" evidence="3">
    <location>
        <begin position="334"/>
        <end position="343"/>
    </location>
</feature>
<feature type="strand" evidence="3">
    <location>
        <begin position="348"/>
        <end position="352"/>
    </location>
</feature>
<feature type="turn" evidence="3">
    <location>
        <begin position="353"/>
        <end position="356"/>
    </location>
</feature>
<feature type="strand" evidence="4">
    <location>
        <begin position="360"/>
        <end position="362"/>
    </location>
</feature>
<feature type="strand" evidence="3">
    <location>
        <begin position="366"/>
        <end position="369"/>
    </location>
</feature>
<comment type="function">
    <text evidence="1">Confers DNA tethering and processivity to DNA polymerases and other proteins. Acts as a clamp, forming a ring around DNA (a reaction catalyzed by the clamp-loading complex) which diffuses in an ATP-independent manner freely and bidirectionally along dsDNA. Initially characterized for its ability to contact the catalytic subunit of DNA polymerase III (Pol III), a complex, multichain enzyme responsible for most of the replicative synthesis in bacteria; Pol III exhibits 3'-5' exonuclease proofreading activity. The beta chain is required for initiation of replication as well as for processivity of DNA replication.</text>
</comment>
<comment type="subunit">
    <text evidence="1">Forms a ring-shaped head-to-tail homodimer around DNA which binds and tethers DNA polymerases and other proteins to the DNA. The DNA replisome complex has a single clamp-loading complex (3 tau and 1 each of delta, delta', psi and chi subunits) which binds 3 Pol III cores (1 core on the leading strand and 2 on the lagging strand) each with a beta sliding clamp dimer. Additional proteins in the replisome are other copies of gamma, psi and chi, Ssb, DNA helicase and RNA primase.</text>
</comment>
<comment type="interaction">
    <interactant intactId="EBI-7532786">
        <id>O25242</id>
    </interactant>
    <interactant intactId="EBI-7532786">
        <id>O25242</id>
        <label>dnaN</label>
    </interactant>
    <organismsDiffer>false</organismsDiffer>
    <experiments>4</experiments>
</comment>
<comment type="interaction">
    <interactant intactId="EBI-7532786">
        <id>O25242</id>
    </interactant>
    <interactant intactId="EBI-9262675">
        <id>O25172</id>
        <label>HP_0418</label>
    </interactant>
    <organismsDiffer>false</organismsDiffer>
    <experiments>3</experiments>
</comment>
<comment type="subcellular location">
    <subcellularLocation>
        <location evidence="1">Cytoplasm</location>
    </subcellularLocation>
</comment>
<comment type="similarity">
    <text evidence="2">Belongs to the beta sliding clamp family.</text>
</comment>
<proteinExistence type="evidence at protein level"/>
<dbReference type="EMBL" id="AE000511">
    <property type="protein sequence ID" value="AAD07565.1"/>
    <property type="molecule type" value="Genomic_DNA"/>
</dbReference>
<dbReference type="PIR" id="D64582">
    <property type="entry name" value="D64582"/>
</dbReference>
<dbReference type="RefSeq" id="NP_207297.1">
    <property type="nucleotide sequence ID" value="NC_000915.1"/>
</dbReference>
<dbReference type="RefSeq" id="WP_000704186.1">
    <property type="nucleotide sequence ID" value="NC_018939.1"/>
</dbReference>
<dbReference type="PDB" id="4RKI">
    <property type="method" value="X-ray"/>
    <property type="resolution" value="2.05 A"/>
    <property type="chains" value="A=1-374"/>
</dbReference>
<dbReference type="PDB" id="4S3I">
    <property type="method" value="X-ray"/>
    <property type="resolution" value="1.95 A"/>
    <property type="chains" value="A/B=1-374"/>
</dbReference>
<dbReference type="PDB" id="5FRQ">
    <property type="method" value="X-ray"/>
    <property type="resolution" value="2.90 A"/>
    <property type="chains" value="A/B/C/D=1-374"/>
</dbReference>
<dbReference type="PDB" id="5FVE">
    <property type="method" value="X-ray"/>
    <property type="resolution" value="2.07 A"/>
    <property type="chains" value="A=1-374"/>
</dbReference>
<dbReference type="PDB" id="5FXT">
    <property type="method" value="X-ray"/>
    <property type="resolution" value="1.97 A"/>
    <property type="chains" value="A=1-374"/>
</dbReference>
<dbReference type="PDB" id="5G48">
    <property type="method" value="X-ray"/>
    <property type="resolution" value="2.28 A"/>
    <property type="chains" value="A/B=1-374"/>
</dbReference>
<dbReference type="PDB" id="5G4Q">
    <property type="method" value="X-ray"/>
    <property type="resolution" value="2.30 A"/>
    <property type="chains" value="A/B=1-374"/>
</dbReference>
<dbReference type="PDBsum" id="4RKI"/>
<dbReference type="PDBsum" id="4S3I"/>
<dbReference type="PDBsum" id="5FRQ"/>
<dbReference type="PDBsum" id="5FVE"/>
<dbReference type="PDBsum" id="5FXT"/>
<dbReference type="PDBsum" id="5G48"/>
<dbReference type="PDBsum" id="5G4Q"/>
<dbReference type="SMR" id="O25242"/>
<dbReference type="DIP" id="DIP-3288N"/>
<dbReference type="FunCoup" id="O25242">
    <property type="interactions" value="279"/>
</dbReference>
<dbReference type="IntAct" id="O25242">
    <property type="interactions" value="3"/>
</dbReference>
<dbReference type="MINT" id="O25242"/>
<dbReference type="STRING" id="85962.HP_0500"/>
<dbReference type="PaxDb" id="85962-C694_02570"/>
<dbReference type="DNASU" id="899259"/>
<dbReference type="EnsemblBacteria" id="AAD07565">
    <property type="protein sequence ID" value="AAD07565"/>
    <property type="gene ID" value="HP_0500"/>
</dbReference>
<dbReference type="KEGG" id="heo:C694_02570"/>
<dbReference type="KEGG" id="hpy:HP_0500"/>
<dbReference type="PATRIC" id="fig|85962.47.peg.538"/>
<dbReference type="eggNOG" id="COG0592">
    <property type="taxonomic scope" value="Bacteria"/>
</dbReference>
<dbReference type="InParanoid" id="O25242"/>
<dbReference type="OrthoDB" id="8421503at2"/>
<dbReference type="PhylomeDB" id="O25242"/>
<dbReference type="EvolutionaryTrace" id="O25242"/>
<dbReference type="Proteomes" id="UP000000429">
    <property type="component" value="Chromosome"/>
</dbReference>
<dbReference type="GO" id="GO:0005737">
    <property type="term" value="C:cytoplasm"/>
    <property type="evidence" value="ECO:0007669"/>
    <property type="project" value="UniProtKB-SubCell"/>
</dbReference>
<dbReference type="GO" id="GO:0009360">
    <property type="term" value="C:DNA polymerase III complex"/>
    <property type="evidence" value="ECO:0007669"/>
    <property type="project" value="InterPro"/>
</dbReference>
<dbReference type="GO" id="GO:0008408">
    <property type="term" value="F:3'-5' exonuclease activity"/>
    <property type="evidence" value="ECO:0007669"/>
    <property type="project" value="InterPro"/>
</dbReference>
<dbReference type="GO" id="GO:0003677">
    <property type="term" value="F:DNA binding"/>
    <property type="evidence" value="ECO:0007669"/>
    <property type="project" value="UniProtKB-KW"/>
</dbReference>
<dbReference type="GO" id="GO:0003887">
    <property type="term" value="F:DNA-directed DNA polymerase activity"/>
    <property type="evidence" value="ECO:0007669"/>
    <property type="project" value="UniProtKB-KW"/>
</dbReference>
<dbReference type="GO" id="GO:0042802">
    <property type="term" value="F:identical protein binding"/>
    <property type="evidence" value="ECO:0000353"/>
    <property type="project" value="IntAct"/>
</dbReference>
<dbReference type="GO" id="GO:0006271">
    <property type="term" value="P:DNA strand elongation involved in DNA replication"/>
    <property type="evidence" value="ECO:0000318"/>
    <property type="project" value="GO_Central"/>
</dbReference>
<dbReference type="CDD" id="cd00140">
    <property type="entry name" value="beta_clamp"/>
    <property type="match status" value="1"/>
</dbReference>
<dbReference type="FunFam" id="3.10.150.10:FF:000020">
    <property type="entry name" value="Beta sliding clamp"/>
    <property type="match status" value="1"/>
</dbReference>
<dbReference type="FunFam" id="3.10.150.10:FF:000018">
    <property type="entry name" value="DNA polymerase III subunit beta"/>
    <property type="match status" value="1"/>
</dbReference>
<dbReference type="FunFam" id="3.10.150.10:FF:000021">
    <property type="entry name" value="DNA polymerase III, beta subunit"/>
    <property type="match status" value="1"/>
</dbReference>
<dbReference type="Gene3D" id="3.10.150.10">
    <property type="entry name" value="DNA Polymerase III, subunit A, domain 2"/>
    <property type="match status" value="3"/>
</dbReference>
<dbReference type="InterPro" id="IPR046938">
    <property type="entry name" value="DNA_clamp_sf"/>
</dbReference>
<dbReference type="InterPro" id="IPR001001">
    <property type="entry name" value="DNA_polIII_beta"/>
</dbReference>
<dbReference type="InterPro" id="IPR022635">
    <property type="entry name" value="DNA_polIII_beta_C"/>
</dbReference>
<dbReference type="InterPro" id="IPR022637">
    <property type="entry name" value="DNA_polIII_beta_cen"/>
</dbReference>
<dbReference type="InterPro" id="IPR022634">
    <property type="entry name" value="DNA_polIII_beta_N"/>
</dbReference>
<dbReference type="NCBIfam" id="TIGR00663">
    <property type="entry name" value="dnan"/>
    <property type="match status" value="1"/>
</dbReference>
<dbReference type="PANTHER" id="PTHR30478:SF0">
    <property type="entry name" value="BETA SLIDING CLAMP"/>
    <property type="match status" value="1"/>
</dbReference>
<dbReference type="PANTHER" id="PTHR30478">
    <property type="entry name" value="DNA POLYMERASE III SUBUNIT BETA"/>
    <property type="match status" value="1"/>
</dbReference>
<dbReference type="Pfam" id="PF00712">
    <property type="entry name" value="DNA_pol3_beta"/>
    <property type="match status" value="1"/>
</dbReference>
<dbReference type="Pfam" id="PF02767">
    <property type="entry name" value="DNA_pol3_beta_2"/>
    <property type="match status" value="1"/>
</dbReference>
<dbReference type="Pfam" id="PF02768">
    <property type="entry name" value="DNA_pol3_beta_3"/>
    <property type="match status" value="1"/>
</dbReference>
<dbReference type="SMART" id="SM00480">
    <property type="entry name" value="POL3Bc"/>
    <property type="match status" value="1"/>
</dbReference>
<dbReference type="SUPFAM" id="SSF55979">
    <property type="entry name" value="DNA clamp"/>
    <property type="match status" value="3"/>
</dbReference>
<evidence type="ECO:0000250" key="1">
    <source>
        <dbReference type="UniProtKB" id="P0A988"/>
    </source>
</evidence>
<evidence type="ECO:0000305" key="2"/>
<evidence type="ECO:0007829" key="3">
    <source>
        <dbReference type="PDB" id="4S3I"/>
    </source>
</evidence>
<evidence type="ECO:0007829" key="4">
    <source>
        <dbReference type="PDB" id="5FXT"/>
    </source>
</evidence>
<sequence length="374" mass="42185">MKISVSKNDLENALRYLQAFLDKKDASSIASHIHLEVIKEKLFLKASDSDIGLKSYIFTQSSDKEGVGTINGKKFLDIISCLKDSNIILETKDDSLAIKQNKSSFKLPMFDADEFPEFPVIDPKVSIEVNAPFLVDAFKKIAPVIEQTSHKRELAGILMQFDQKHQTLSVVGTDTKRLSYTQLEKISIHSTEEDISCILPKRALLEILKLFYENFSFKSDGMLAVIENEMHTFFTKLIDGNYPDYQKILPKEYISSFTLGKEEFKESIKLCSSLSSTIKLTLEKNNALFESLDSEHSETAKTSVEIEKGLDIEKAFHLGVNAKFFLEALNALGTTQFVLRCNEPSSPFLIQESLDEKQSHLNAKISTLMMPITL</sequence>
<gene>
    <name type="primary">dnaN</name>
    <name type="ordered locus">HP_0500</name>
</gene>
<reference key="1">
    <citation type="journal article" date="1997" name="Nature">
        <title>The complete genome sequence of the gastric pathogen Helicobacter pylori.</title>
        <authorList>
            <person name="Tomb J.-F."/>
            <person name="White O."/>
            <person name="Kerlavage A.R."/>
            <person name="Clayton R.A."/>
            <person name="Sutton G.G."/>
            <person name="Fleischmann R.D."/>
            <person name="Ketchum K.A."/>
            <person name="Klenk H.-P."/>
            <person name="Gill S.R."/>
            <person name="Dougherty B.A."/>
            <person name="Nelson K.E."/>
            <person name="Quackenbush J."/>
            <person name="Zhou L."/>
            <person name="Kirkness E.F."/>
            <person name="Peterson S.N."/>
            <person name="Loftus B.J."/>
            <person name="Richardson D.L."/>
            <person name="Dodson R.J."/>
            <person name="Khalak H.G."/>
            <person name="Glodek A."/>
            <person name="McKenney K."/>
            <person name="FitzGerald L.M."/>
            <person name="Lee N."/>
            <person name="Adams M.D."/>
            <person name="Hickey E.K."/>
            <person name="Berg D.E."/>
            <person name="Gocayne J.D."/>
            <person name="Utterback T.R."/>
            <person name="Peterson J.D."/>
            <person name="Kelley J.M."/>
            <person name="Cotton M.D."/>
            <person name="Weidman J.F."/>
            <person name="Fujii C."/>
            <person name="Bowman C."/>
            <person name="Watthey L."/>
            <person name="Wallin E."/>
            <person name="Hayes W.S."/>
            <person name="Borodovsky M."/>
            <person name="Karp P.D."/>
            <person name="Smith H.O."/>
            <person name="Fraser C.M."/>
            <person name="Venter J.C."/>
        </authorList>
    </citation>
    <scope>NUCLEOTIDE SEQUENCE [LARGE SCALE GENOMIC DNA]</scope>
    <source>
        <strain>ATCC 700392 / 26695</strain>
    </source>
</reference>
<name>DPO3B_HELPY</name>